<sequence length="373" mass="39654">MLIGVPKEIKNNENRVAITPAGVEAFVLAGHKVYIEKGAGLGSAITDEEYVAAGAEILATAKEVFDTAEMIIKVKEPLKSEFELFKEGQILFTYLHLAPEPQLTKALLDKKITGIAYETVQLADRSLPLLTPMSEIAGRMSIQLGAQYLEKQEGGKGVLLGGVPGVEPAEVVIVGGGIVGTNAAKIAVGMGAKVTILDVNTRRLAYLDDIFGNKVTTLMSNSFNIAKAVKKADLLVGCVLIPGAKAPKLVSEEMVKSMQPGSVIVDVAIDQGGSIETIDRITTHDNPTYEKFGVIHYAVANIPGAVARTSTYALTNDTLPYALQIANKGYKQAVIENPALLKGLNTLNGKVTYEAVAKAHDLPYTPAEKALNE</sequence>
<gene>
    <name evidence="6" type="primary">ald</name>
    <name type="ordered locus">MMP1513</name>
</gene>
<evidence type="ECO:0000250" key="1"/>
<evidence type="ECO:0000250" key="2">
    <source>
        <dbReference type="UniProtKB" id="A0QVQ8"/>
    </source>
</evidence>
<evidence type="ECO:0000250" key="3">
    <source>
        <dbReference type="UniProtKB" id="P9WQB1"/>
    </source>
</evidence>
<evidence type="ECO:0000255" key="4"/>
<evidence type="ECO:0000269" key="5">
    <source>
    </source>
</evidence>
<evidence type="ECO:0000303" key="6">
    <source>
    </source>
</evidence>
<evidence type="ECO:0000305" key="7"/>
<evidence type="ECO:0000305" key="8">
    <source>
    </source>
</evidence>
<proteinExistence type="evidence at protein level"/>
<organism>
    <name type="scientific">Methanococcus maripaludis (strain DSM 14266 / JCM 13030 / NBRC 101832 / S2 / LL)</name>
    <dbReference type="NCBI Taxonomy" id="267377"/>
    <lineage>
        <taxon>Archaea</taxon>
        <taxon>Methanobacteriati</taxon>
        <taxon>Methanobacteriota</taxon>
        <taxon>Methanomada group</taxon>
        <taxon>Methanococci</taxon>
        <taxon>Methanococcales</taxon>
        <taxon>Methanococcaceae</taxon>
        <taxon>Methanococcus</taxon>
    </lineage>
</organism>
<protein>
    <recommendedName>
        <fullName evidence="6">Alanine dehydrogenase</fullName>
        <ecNumber evidence="8">1.4.1.1</ecNumber>
    </recommendedName>
</protein>
<reference key="1">
    <citation type="journal article" date="2004" name="J. Bacteriol.">
        <title>Complete genome sequence of the genetically tractable hydrogenotrophic methanogen Methanococcus maripaludis.</title>
        <authorList>
            <person name="Hendrickson E.L."/>
            <person name="Kaul R."/>
            <person name="Zhou Y."/>
            <person name="Bovee D."/>
            <person name="Chapman P."/>
            <person name="Chung J."/>
            <person name="Conway de Macario E."/>
            <person name="Dodsworth J.A."/>
            <person name="Gillett W."/>
            <person name="Graham D.E."/>
            <person name="Hackett M."/>
            <person name="Haydock A.K."/>
            <person name="Kang A."/>
            <person name="Land M.L."/>
            <person name="Levy R."/>
            <person name="Lie T.J."/>
            <person name="Major T.A."/>
            <person name="Moore B.C."/>
            <person name="Porat I."/>
            <person name="Palmeiri A."/>
            <person name="Rouse G."/>
            <person name="Saenphimmachak C."/>
            <person name="Soell D."/>
            <person name="Van Dien S."/>
            <person name="Wang T."/>
            <person name="Whitman W.B."/>
            <person name="Xia Q."/>
            <person name="Zhang Y."/>
            <person name="Larimer F.W."/>
            <person name="Olson M.V."/>
            <person name="Leigh J.A."/>
        </authorList>
    </citation>
    <scope>NUCLEOTIDE SEQUENCE [LARGE SCALE GENOMIC DNA]</scope>
    <source>
        <strain>DSM 14266 / JCM 13030 / NBRC 101832 / S2 / LL</strain>
    </source>
</reference>
<reference key="2">
    <citation type="journal article" date="2005" name="J. Bacteriol.">
        <title>Markerless mutagenesis in Methanococcus maripaludis demonstrates roles for alanine dehydrogenase, alanine racemase, and alanine permease.</title>
        <authorList>
            <person name="Moore B.C."/>
            <person name="Leigh J.A."/>
        </authorList>
    </citation>
    <scope>FUNCTION AS AN ALANINE DEHYDROGENASE</scope>
    <scope>DISRUPTION PHENOTYPE</scope>
    <source>
        <strain>DSM 14266 / JCM 13030 / NBRC 101832 / S2 / LL</strain>
    </source>
</reference>
<name>DHA_METMP</name>
<keyword id="KW-0963">Cytoplasm</keyword>
<keyword id="KW-0520">NAD</keyword>
<keyword id="KW-0547">Nucleotide-binding</keyword>
<keyword id="KW-0560">Oxidoreductase</keyword>
<keyword id="KW-1185">Reference proteome</keyword>
<accession>Q6LX40</accession>
<comment type="function">
    <text evidence="5">Catalyzes the reversible reductive amination of pyruvate to L-alanine. This enzyme is a key factor in the assimilation of L-alanine as an energy source through the tricarboxylic acid cycle.</text>
</comment>
<comment type="catalytic activity">
    <reaction evidence="8">
        <text>L-alanine + NAD(+) + H2O = pyruvate + NH4(+) + NADH + H(+)</text>
        <dbReference type="Rhea" id="RHEA:18405"/>
        <dbReference type="ChEBI" id="CHEBI:15361"/>
        <dbReference type="ChEBI" id="CHEBI:15377"/>
        <dbReference type="ChEBI" id="CHEBI:15378"/>
        <dbReference type="ChEBI" id="CHEBI:28938"/>
        <dbReference type="ChEBI" id="CHEBI:57540"/>
        <dbReference type="ChEBI" id="CHEBI:57945"/>
        <dbReference type="ChEBI" id="CHEBI:57972"/>
        <dbReference type="EC" id="1.4.1.1"/>
    </reaction>
</comment>
<comment type="pathway">
    <text>Amino-acid degradation; L-alanine degradation via dehydrogenase pathway; NH(3) and pyruvate from L-alanine: step 1/1.</text>
</comment>
<comment type="subunit">
    <text evidence="3">Homohexamer. Trimer of dimer (By similarity).</text>
</comment>
<comment type="subcellular location">
    <subcellularLocation>
        <location evidence="2">Cytoplasm</location>
    </subcellularLocation>
</comment>
<comment type="disruption phenotype">
    <text evidence="5">No growth on either stereoisoform of alanine.</text>
</comment>
<comment type="similarity">
    <text evidence="7">Belongs to the AlaDH/PNT family.</text>
</comment>
<dbReference type="EC" id="1.4.1.1" evidence="8"/>
<dbReference type="EMBL" id="BX950229">
    <property type="protein sequence ID" value="CAF31069.1"/>
    <property type="molecule type" value="Genomic_DNA"/>
</dbReference>
<dbReference type="RefSeq" id="WP_011171457.1">
    <property type="nucleotide sequence ID" value="NC_005791.1"/>
</dbReference>
<dbReference type="SMR" id="Q6LX40"/>
<dbReference type="STRING" id="267377.MMP1513"/>
<dbReference type="EnsemblBacteria" id="CAF31069">
    <property type="protein sequence ID" value="CAF31069"/>
    <property type="gene ID" value="MMP1513"/>
</dbReference>
<dbReference type="GeneID" id="2762318"/>
<dbReference type="KEGG" id="mmp:MMP1513"/>
<dbReference type="PATRIC" id="fig|267377.15.peg.1550"/>
<dbReference type="eggNOG" id="arCOG06678">
    <property type="taxonomic scope" value="Archaea"/>
</dbReference>
<dbReference type="HOGENOM" id="CLU_003376_3_0_2"/>
<dbReference type="OrthoDB" id="8889at2157"/>
<dbReference type="UniPathway" id="UPA00527">
    <property type="reaction ID" value="UER00585"/>
</dbReference>
<dbReference type="Proteomes" id="UP000000590">
    <property type="component" value="Chromosome"/>
</dbReference>
<dbReference type="GO" id="GO:0005829">
    <property type="term" value="C:cytosol"/>
    <property type="evidence" value="ECO:0000250"/>
    <property type="project" value="UniProtKB"/>
</dbReference>
<dbReference type="GO" id="GO:0005886">
    <property type="term" value="C:plasma membrane"/>
    <property type="evidence" value="ECO:0007669"/>
    <property type="project" value="TreeGrafter"/>
</dbReference>
<dbReference type="GO" id="GO:0000286">
    <property type="term" value="F:alanine dehydrogenase activity"/>
    <property type="evidence" value="ECO:0000315"/>
    <property type="project" value="UniProtKB"/>
</dbReference>
<dbReference type="GO" id="GO:0000166">
    <property type="term" value="F:nucleotide binding"/>
    <property type="evidence" value="ECO:0007669"/>
    <property type="project" value="UniProtKB-KW"/>
</dbReference>
<dbReference type="GO" id="GO:0006524">
    <property type="term" value="P:alanine catabolic process"/>
    <property type="evidence" value="ECO:0000250"/>
    <property type="project" value="UniProtKB"/>
</dbReference>
<dbReference type="GO" id="GO:0042853">
    <property type="term" value="P:L-alanine catabolic process"/>
    <property type="evidence" value="ECO:0007669"/>
    <property type="project" value="UniProtKB-UniPathway"/>
</dbReference>
<dbReference type="CDD" id="cd05305">
    <property type="entry name" value="L-AlaDH"/>
    <property type="match status" value="1"/>
</dbReference>
<dbReference type="FunFam" id="3.40.50.720:FF:000049">
    <property type="entry name" value="Alanine dehydrogenase"/>
    <property type="match status" value="1"/>
</dbReference>
<dbReference type="Gene3D" id="3.40.50.720">
    <property type="entry name" value="NAD(P)-binding Rossmann-like Domain"/>
    <property type="match status" value="2"/>
</dbReference>
<dbReference type="InterPro" id="IPR008141">
    <property type="entry name" value="Ala_DH"/>
</dbReference>
<dbReference type="InterPro" id="IPR008143">
    <property type="entry name" value="Ala_DH/PNT_CS2"/>
</dbReference>
<dbReference type="InterPro" id="IPR007886">
    <property type="entry name" value="AlaDH/PNT_N"/>
</dbReference>
<dbReference type="InterPro" id="IPR007698">
    <property type="entry name" value="AlaDH/PNT_NAD(H)-bd"/>
</dbReference>
<dbReference type="InterPro" id="IPR036291">
    <property type="entry name" value="NAD(P)-bd_dom_sf"/>
</dbReference>
<dbReference type="NCBIfam" id="TIGR00518">
    <property type="entry name" value="alaDH"/>
    <property type="match status" value="1"/>
</dbReference>
<dbReference type="PANTHER" id="PTHR42795">
    <property type="entry name" value="ALANINE DEHYDROGENASE"/>
    <property type="match status" value="1"/>
</dbReference>
<dbReference type="PANTHER" id="PTHR42795:SF1">
    <property type="entry name" value="ALANINE DEHYDROGENASE"/>
    <property type="match status" value="1"/>
</dbReference>
<dbReference type="Pfam" id="PF01262">
    <property type="entry name" value="AlaDh_PNT_C"/>
    <property type="match status" value="1"/>
</dbReference>
<dbReference type="Pfam" id="PF05222">
    <property type="entry name" value="AlaDh_PNT_N"/>
    <property type="match status" value="1"/>
</dbReference>
<dbReference type="PIRSF" id="PIRSF000183">
    <property type="entry name" value="Alanine_dh"/>
    <property type="match status" value="1"/>
</dbReference>
<dbReference type="SMART" id="SM01002">
    <property type="entry name" value="AlaDh_PNT_C"/>
    <property type="match status" value="1"/>
</dbReference>
<dbReference type="SMART" id="SM01003">
    <property type="entry name" value="AlaDh_PNT_N"/>
    <property type="match status" value="1"/>
</dbReference>
<dbReference type="SUPFAM" id="SSF52283">
    <property type="entry name" value="Formate/glycerate dehydrogenase catalytic domain-like"/>
    <property type="match status" value="1"/>
</dbReference>
<dbReference type="SUPFAM" id="SSF51735">
    <property type="entry name" value="NAD(P)-binding Rossmann-fold domains"/>
    <property type="match status" value="1"/>
</dbReference>
<dbReference type="PROSITE" id="PS00837">
    <property type="entry name" value="ALADH_PNT_2"/>
    <property type="match status" value="1"/>
</dbReference>
<feature type="chain" id="PRO_0000415443" description="Alanine dehydrogenase">
    <location>
        <begin position="1"/>
        <end position="373"/>
    </location>
</feature>
<feature type="active site" description="Proton donor/acceptor" evidence="4">
    <location>
        <position position="96"/>
    </location>
</feature>
<feature type="active site" description="Proton donor/acceptor" evidence="1">
    <location>
        <position position="270"/>
    </location>
</feature>
<feature type="binding site" evidence="1">
    <location>
        <position position="15"/>
    </location>
    <ligand>
        <name>substrate</name>
    </ligand>
</feature>
<feature type="binding site" evidence="1">
    <location>
        <position position="75"/>
    </location>
    <ligand>
        <name>substrate</name>
    </ligand>
</feature>
<feature type="binding site" evidence="1">
    <location>
        <position position="134"/>
    </location>
    <ligand>
        <name>NAD(+)</name>
        <dbReference type="ChEBI" id="CHEBI:57540"/>
    </ligand>
</feature>
<feature type="binding site" evidence="1">
    <location>
        <begin position="178"/>
        <end position="179"/>
    </location>
    <ligand>
        <name>NAD(+)</name>
        <dbReference type="ChEBI" id="CHEBI:57540"/>
    </ligand>
</feature>
<feature type="binding site" evidence="1">
    <location>
        <position position="198"/>
    </location>
    <ligand>
        <name>NAD(+)</name>
        <dbReference type="ChEBI" id="CHEBI:57540"/>
    </ligand>
</feature>
<feature type="binding site" evidence="1">
    <location>
        <position position="220"/>
    </location>
    <ligand>
        <name>NAD(+)</name>
        <dbReference type="ChEBI" id="CHEBI:57540"/>
    </ligand>
</feature>
<feature type="binding site" evidence="1">
    <location>
        <begin position="239"/>
        <end position="240"/>
    </location>
    <ligand>
        <name>NAD(+)</name>
        <dbReference type="ChEBI" id="CHEBI:57540"/>
    </ligand>
</feature>
<feature type="binding site" evidence="1">
    <location>
        <begin position="267"/>
        <end position="270"/>
    </location>
    <ligand>
        <name>NAD(+)</name>
        <dbReference type="ChEBI" id="CHEBI:57540"/>
    </ligand>
</feature>
<feature type="binding site" evidence="1">
    <location>
        <position position="280"/>
    </location>
    <ligand>
        <name>NAD(+)</name>
        <dbReference type="ChEBI" id="CHEBI:57540"/>
    </ligand>
</feature>
<feature type="binding site" evidence="1">
    <location>
        <begin position="299"/>
        <end position="302"/>
    </location>
    <ligand>
        <name>NAD(+)</name>
        <dbReference type="ChEBI" id="CHEBI:57540"/>
    </ligand>
</feature>